<proteinExistence type="evidence at protein level"/>
<accession>P09942</accession>
<dbReference type="PIR" id="B24376">
    <property type="entry name" value="B24376"/>
</dbReference>
<dbReference type="SMR" id="P09942"/>
<dbReference type="MEROPS" id="I03.019"/>
<dbReference type="GO" id="GO:0004867">
    <property type="term" value="F:serine-type endopeptidase inhibitor activity"/>
    <property type="evidence" value="ECO:0007669"/>
    <property type="project" value="UniProtKB-KW"/>
</dbReference>
<dbReference type="Gene3D" id="2.80.10.50">
    <property type="match status" value="1"/>
</dbReference>
<dbReference type="InterPro" id="IPR011065">
    <property type="entry name" value="Kunitz_inhibitor_STI-like_sf"/>
</dbReference>
<dbReference type="SUPFAM" id="SSF50386">
    <property type="entry name" value="STI-like"/>
    <property type="match status" value="1"/>
</dbReference>
<protein>
    <recommendedName>
        <fullName>Trypsin inhibitor DE5 beta chain</fullName>
    </recommendedName>
</protein>
<comment type="function">
    <text>Inhibition of trypsin.</text>
</comment>
<comment type="subunit">
    <text>Heterodimer of an alpha and a beta chain linked by a disulfide bond.</text>
</comment>
<comment type="similarity">
    <text evidence="2">Belongs to the protease inhibitor I3 (leguminous Kunitz-type inhibitor) family.</text>
</comment>
<reference key="1">
    <citation type="journal article" date="1986" name="Biochim. Biophys. Acta">
        <title>The amino acid sequence and reactive (inhibitory) site of the major trypsin isoinhibitor (DE5) isolated from seeds of the Brazilian Carolina tree (Adenanthera pavonina L.).</title>
        <authorList>
            <person name="Richardson M."/>
            <person name="Campos F.A.P."/>
            <person name="Xavier-Filho J."/>
            <person name="Macedo M.L.R."/>
            <person name="Maia G.M.C."/>
            <person name="Yarwood A."/>
        </authorList>
    </citation>
    <scope>PROTEIN SEQUENCE</scope>
    <source>
        <tissue>Seed</tissue>
    </source>
</reference>
<organism>
    <name type="scientific">Adenanthera pavonina</name>
    <name type="common">Sandal bead tree</name>
    <name type="synonym">Condori wood</name>
    <dbReference type="NCBI Taxonomy" id="3811"/>
    <lineage>
        <taxon>Eukaryota</taxon>
        <taxon>Viridiplantae</taxon>
        <taxon>Streptophyta</taxon>
        <taxon>Embryophyta</taxon>
        <taxon>Tracheophyta</taxon>
        <taxon>Spermatophyta</taxon>
        <taxon>Magnoliopsida</taxon>
        <taxon>eudicotyledons</taxon>
        <taxon>Gunneridae</taxon>
        <taxon>Pentapetalae</taxon>
        <taxon>rosids</taxon>
        <taxon>fabids</taxon>
        <taxon>Fabales</taxon>
        <taxon>Fabaceae</taxon>
        <taxon>Caesalpinioideae</taxon>
        <taxon>mimosoid clade</taxon>
        <taxon>Mimoseae</taxon>
        <taxon>Adenanthera</taxon>
    </lineage>
</organism>
<name>ID5B_ADEPA</name>
<evidence type="ECO:0000250" key="1"/>
<evidence type="ECO:0000305" key="2"/>
<keyword id="KW-0903">Direct protein sequencing</keyword>
<keyword id="KW-1015">Disulfide bond</keyword>
<keyword id="KW-0646">Protease inhibitor</keyword>
<keyword id="KW-0722">Serine protease inhibitor</keyword>
<sequence>LECKDLGISIDDDNNRRLAVKEGDPLVVQFVNADREGN</sequence>
<feature type="chain" id="PRO_0000083293" description="Trypsin inhibitor DE5 beta chain">
    <location>
        <begin position="1"/>
        <end position="38"/>
    </location>
</feature>
<feature type="disulfide bond" description="Interchain (with alpha chain)" evidence="1">
    <location>
        <position position="3"/>
    </location>
</feature>
<feature type="sequence variant">
    <original>L</original>
    <variation>P</variation>
    <location>
        <position position="1"/>
    </location>
</feature>